<comment type="function">
    <text evidence="1">Negatively regulates transcription of bacterial ribonucleotide reductase nrd genes and operons by binding to NrdR-boxes.</text>
</comment>
<comment type="cofactor">
    <cofactor evidence="1">
        <name>Zn(2+)</name>
        <dbReference type="ChEBI" id="CHEBI:29105"/>
    </cofactor>
    <text evidence="1">Binds 1 zinc ion.</text>
</comment>
<comment type="similarity">
    <text evidence="1">Belongs to the NrdR family.</text>
</comment>
<gene>
    <name evidence="1" type="primary">nrdR</name>
    <name type="ordered locus">BH07550</name>
</gene>
<accession>Q6G3L2</accession>
<evidence type="ECO:0000255" key="1">
    <source>
        <dbReference type="HAMAP-Rule" id="MF_00440"/>
    </source>
</evidence>
<keyword id="KW-0067">ATP-binding</keyword>
<keyword id="KW-0238">DNA-binding</keyword>
<keyword id="KW-0479">Metal-binding</keyword>
<keyword id="KW-0547">Nucleotide-binding</keyword>
<keyword id="KW-0678">Repressor</keyword>
<keyword id="KW-0804">Transcription</keyword>
<keyword id="KW-0805">Transcription regulation</keyword>
<keyword id="KW-0862">Zinc</keyword>
<keyword id="KW-0863">Zinc-finger</keyword>
<protein>
    <recommendedName>
        <fullName evidence="1">Transcriptional repressor NrdR</fullName>
    </recommendedName>
</protein>
<name>NRDR_BARHE</name>
<reference key="1">
    <citation type="journal article" date="2004" name="Proc. Natl. Acad. Sci. U.S.A.">
        <title>The louse-borne human pathogen Bartonella quintana is a genomic derivative of the zoonotic agent Bartonella henselae.</title>
        <authorList>
            <person name="Alsmark U.C.M."/>
            <person name="Frank A.C."/>
            <person name="Karlberg E.O."/>
            <person name="Legault B.-A."/>
            <person name="Ardell D.H."/>
            <person name="Canbaeck B."/>
            <person name="Eriksson A.-S."/>
            <person name="Naeslund A.K."/>
            <person name="Handley S.A."/>
            <person name="Huvet M."/>
            <person name="La Scola B."/>
            <person name="Holmberg M."/>
            <person name="Andersson S.G.E."/>
        </authorList>
    </citation>
    <scope>NUCLEOTIDE SEQUENCE [LARGE SCALE GENOMIC DNA]</scope>
    <source>
        <strain>ATCC 49882 / DSM 28221 / CCUG 30454 / Houston 1</strain>
    </source>
</reference>
<dbReference type="EMBL" id="BX897699">
    <property type="protein sequence ID" value="CAF27556.1"/>
    <property type="molecule type" value="Genomic_DNA"/>
</dbReference>
<dbReference type="RefSeq" id="WP_011180657.1">
    <property type="nucleotide sequence ID" value="NZ_LRIJ02000001.1"/>
</dbReference>
<dbReference type="SMR" id="Q6G3L2"/>
<dbReference type="PaxDb" id="283166-BH07550"/>
<dbReference type="EnsemblBacteria" id="CAF27556">
    <property type="protein sequence ID" value="CAF27556"/>
    <property type="gene ID" value="BH07550"/>
</dbReference>
<dbReference type="GeneID" id="92985574"/>
<dbReference type="KEGG" id="bhe:BH07550"/>
<dbReference type="eggNOG" id="COG1327">
    <property type="taxonomic scope" value="Bacteria"/>
</dbReference>
<dbReference type="OrthoDB" id="9807461at2"/>
<dbReference type="Proteomes" id="UP000000421">
    <property type="component" value="Chromosome"/>
</dbReference>
<dbReference type="GO" id="GO:0005524">
    <property type="term" value="F:ATP binding"/>
    <property type="evidence" value="ECO:0007669"/>
    <property type="project" value="UniProtKB-KW"/>
</dbReference>
<dbReference type="GO" id="GO:0003677">
    <property type="term" value="F:DNA binding"/>
    <property type="evidence" value="ECO:0007669"/>
    <property type="project" value="UniProtKB-KW"/>
</dbReference>
<dbReference type="GO" id="GO:0008270">
    <property type="term" value="F:zinc ion binding"/>
    <property type="evidence" value="ECO:0007669"/>
    <property type="project" value="UniProtKB-UniRule"/>
</dbReference>
<dbReference type="GO" id="GO:0045892">
    <property type="term" value="P:negative regulation of DNA-templated transcription"/>
    <property type="evidence" value="ECO:0007669"/>
    <property type="project" value="UniProtKB-UniRule"/>
</dbReference>
<dbReference type="HAMAP" id="MF_00440">
    <property type="entry name" value="NrdR"/>
    <property type="match status" value="1"/>
</dbReference>
<dbReference type="InterPro" id="IPR005144">
    <property type="entry name" value="ATP-cone_dom"/>
</dbReference>
<dbReference type="InterPro" id="IPR055173">
    <property type="entry name" value="NrdR-like_N"/>
</dbReference>
<dbReference type="InterPro" id="IPR003796">
    <property type="entry name" value="RNR_NrdR-like"/>
</dbReference>
<dbReference type="NCBIfam" id="TIGR00244">
    <property type="entry name" value="transcriptional regulator NrdR"/>
    <property type="match status" value="1"/>
</dbReference>
<dbReference type="PANTHER" id="PTHR30455">
    <property type="entry name" value="TRANSCRIPTIONAL REPRESSOR NRDR"/>
    <property type="match status" value="1"/>
</dbReference>
<dbReference type="PANTHER" id="PTHR30455:SF2">
    <property type="entry name" value="TRANSCRIPTIONAL REPRESSOR NRDR"/>
    <property type="match status" value="1"/>
</dbReference>
<dbReference type="Pfam" id="PF03477">
    <property type="entry name" value="ATP-cone"/>
    <property type="match status" value="1"/>
</dbReference>
<dbReference type="Pfam" id="PF22811">
    <property type="entry name" value="Zn_ribbon_NrdR"/>
    <property type="match status" value="1"/>
</dbReference>
<dbReference type="PROSITE" id="PS51161">
    <property type="entry name" value="ATP_CONE"/>
    <property type="match status" value="1"/>
</dbReference>
<proteinExistence type="inferred from homology"/>
<feature type="chain" id="PRO_0000182267" description="Transcriptional repressor NrdR">
    <location>
        <begin position="1"/>
        <end position="160"/>
    </location>
</feature>
<feature type="domain" description="ATP-cone" evidence="1">
    <location>
        <begin position="49"/>
        <end position="139"/>
    </location>
</feature>
<feature type="zinc finger region" evidence="1">
    <location>
        <begin position="3"/>
        <end position="34"/>
    </location>
</feature>
<sequence>MRCPYCQYEDTQVKDSRPSEEGTVIRRRRICSVCGGRFTTFERVQLRELLVLKKSGRYEPFDRDKLMRSVEIAVRKRGIDPDYIERVISGIVRQLESLGEPEISSEKIGLLVMKALKSIDDIAYIRFASVYRDFRNASDFHDVIEELSKGITDTESCFDE</sequence>
<organism>
    <name type="scientific">Bartonella henselae (strain ATCC 49882 / DSM 28221 / CCUG 30454 / Houston 1)</name>
    <name type="common">Rochalimaea henselae</name>
    <dbReference type="NCBI Taxonomy" id="283166"/>
    <lineage>
        <taxon>Bacteria</taxon>
        <taxon>Pseudomonadati</taxon>
        <taxon>Pseudomonadota</taxon>
        <taxon>Alphaproteobacteria</taxon>
        <taxon>Hyphomicrobiales</taxon>
        <taxon>Bartonellaceae</taxon>
        <taxon>Bartonella</taxon>
    </lineage>
</organism>